<keyword id="KW-0169">Cobalamin biosynthesis</keyword>
<keyword id="KW-0456">Lyase</keyword>
<keyword id="KW-0489">Methyltransferase</keyword>
<keyword id="KW-0511">Multifunctional enzyme</keyword>
<keyword id="KW-0520">NAD</keyword>
<keyword id="KW-0560">Oxidoreductase</keyword>
<keyword id="KW-0597">Phosphoprotein</keyword>
<keyword id="KW-0627">Porphyrin biosynthesis</keyword>
<keyword id="KW-1185">Reference proteome</keyword>
<keyword id="KW-0949">S-adenosyl-L-methionine</keyword>
<keyword id="KW-0808">Transferase</keyword>
<organism>
    <name type="scientific">Nitrosococcus oceani (strain ATCC 19707 / BCRC 17464 / JCM 30415 / NCIMB 11848 / C-107)</name>
    <dbReference type="NCBI Taxonomy" id="323261"/>
    <lineage>
        <taxon>Bacteria</taxon>
        <taxon>Pseudomonadati</taxon>
        <taxon>Pseudomonadota</taxon>
        <taxon>Gammaproteobacteria</taxon>
        <taxon>Chromatiales</taxon>
        <taxon>Chromatiaceae</taxon>
        <taxon>Nitrosococcus</taxon>
    </lineage>
</organism>
<gene>
    <name evidence="1" type="primary">cysG</name>
    <name type="ordered locus">Noc_0863</name>
</gene>
<name>CYSG_NITOC</name>
<comment type="function">
    <text evidence="1">Multifunctional enzyme that catalyzes the SAM-dependent methylations of uroporphyrinogen III at position C-2 and C-7 to form precorrin-2 via precorrin-1. Then it catalyzes the NAD-dependent ring dehydrogenation of precorrin-2 to yield sirohydrochlorin. Finally, it catalyzes the ferrochelation of sirohydrochlorin to yield siroheme.</text>
</comment>
<comment type="catalytic activity">
    <reaction evidence="1">
        <text>uroporphyrinogen III + 2 S-adenosyl-L-methionine = precorrin-2 + 2 S-adenosyl-L-homocysteine + H(+)</text>
        <dbReference type="Rhea" id="RHEA:32459"/>
        <dbReference type="ChEBI" id="CHEBI:15378"/>
        <dbReference type="ChEBI" id="CHEBI:57308"/>
        <dbReference type="ChEBI" id="CHEBI:57856"/>
        <dbReference type="ChEBI" id="CHEBI:58827"/>
        <dbReference type="ChEBI" id="CHEBI:59789"/>
        <dbReference type="EC" id="2.1.1.107"/>
    </reaction>
</comment>
<comment type="catalytic activity">
    <reaction evidence="1">
        <text>precorrin-2 + NAD(+) = sirohydrochlorin + NADH + 2 H(+)</text>
        <dbReference type="Rhea" id="RHEA:15613"/>
        <dbReference type="ChEBI" id="CHEBI:15378"/>
        <dbReference type="ChEBI" id="CHEBI:57540"/>
        <dbReference type="ChEBI" id="CHEBI:57945"/>
        <dbReference type="ChEBI" id="CHEBI:58351"/>
        <dbReference type="ChEBI" id="CHEBI:58827"/>
        <dbReference type="EC" id="1.3.1.76"/>
    </reaction>
</comment>
<comment type="catalytic activity">
    <reaction evidence="1">
        <text>siroheme + 2 H(+) = sirohydrochlorin + Fe(2+)</text>
        <dbReference type="Rhea" id="RHEA:24360"/>
        <dbReference type="ChEBI" id="CHEBI:15378"/>
        <dbReference type="ChEBI" id="CHEBI:29033"/>
        <dbReference type="ChEBI" id="CHEBI:58351"/>
        <dbReference type="ChEBI" id="CHEBI:60052"/>
        <dbReference type="EC" id="4.99.1.4"/>
    </reaction>
</comment>
<comment type="pathway">
    <text evidence="1">Cofactor biosynthesis; adenosylcobalamin biosynthesis; precorrin-2 from uroporphyrinogen III: step 1/1.</text>
</comment>
<comment type="pathway">
    <text evidence="1">Cofactor biosynthesis; adenosylcobalamin biosynthesis; sirohydrochlorin from precorrin-2: step 1/1.</text>
</comment>
<comment type="pathway">
    <text evidence="1">Porphyrin-containing compound metabolism; siroheme biosynthesis; precorrin-2 from uroporphyrinogen III: step 1/1.</text>
</comment>
<comment type="pathway">
    <text evidence="1">Porphyrin-containing compound metabolism; siroheme biosynthesis; siroheme from sirohydrochlorin: step 1/1.</text>
</comment>
<comment type="pathway">
    <text evidence="1">Porphyrin-containing compound metabolism; siroheme biosynthesis; sirohydrochlorin from precorrin-2: step 1/1.</text>
</comment>
<comment type="similarity">
    <text evidence="1">In the N-terminal section; belongs to the precorrin-2 dehydrogenase / sirohydrochlorin ferrochelatase family.</text>
</comment>
<comment type="similarity">
    <text evidence="1">In the C-terminal section; belongs to the precorrin methyltransferase family.</text>
</comment>
<reference key="1">
    <citation type="journal article" date="2006" name="Appl. Environ. Microbiol.">
        <title>Complete genome sequence of the marine, chemolithoautotrophic, ammonia-oxidizing bacterium Nitrosococcus oceani ATCC 19707.</title>
        <authorList>
            <person name="Klotz M.G."/>
            <person name="Arp D.J."/>
            <person name="Chain P.S.G."/>
            <person name="El-Sheikh A.F."/>
            <person name="Hauser L.J."/>
            <person name="Hommes N.G."/>
            <person name="Larimer F.W."/>
            <person name="Malfatti S.A."/>
            <person name="Norton J.M."/>
            <person name="Poret-Peterson A.T."/>
            <person name="Vergez L.M."/>
            <person name="Ward B.B."/>
        </authorList>
    </citation>
    <scope>NUCLEOTIDE SEQUENCE [LARGE SCALE GENOMIC DNA]</scope>
    <source>
        <strain>ATCC 19707 / BCRC 17464 / JCM 30415 / NCIMB 11848 / C-107</strain>
    </source>
</reference>
<dbReference type="EC" id="2.1.1.107" evidence="1"/>
<dbReference type="EC" id="1.3.1.76" evidence="1"/>
<dbReference type="EC" id="4.99.1.4" evidence="1"/>
<dbReference type="EMBL" id="CP000127">
    <property type="protein sequence ID" value="ABA57376.1"/>
    <property type="molecule type" value="Genomic_DNA"/>
</dbReference>
<dbReference type="RefSeq" id="WP_002810502.1">
    <property type="nucleotide sequence ID" value="NC_007484.1"/>
</dbReference>
<dbReference type="SMR" id="Q3JCS0"/>
<dbReference type="FunCoup" id="Q3JCS0">
    <property type="interactions" value="243"/>
</dbReference>
<dbReference type="STRING" id="323261.Noc_0863"/>
<dbReference type="KEGG" id="noc:Noc_0863"/>
<dbReference type="eggNOG" id="COG0007">
    <property type="taxonomic scope" value="Bacteria"/>
</dbReference>
<dbReference type="eggNOG" id="COG1648">
    <property type="taxonomic scope" value="Bacteria"/>
</dbReference>
<dbReference type="HOGENOM" id="CLU_011276_2_1_6"/>
<dbReference type="InParanoid" id="Q3JCS0"/>
<dbReference type="UniPathway" id="UPA00148">
    <property type="reaction ID" value="UER00211"/>
</dbReference>
<dbReference type="UniPathway" id="UPA00148">
    <property type="reaction ID" value="UER00222"/>
</dbReference>
<dbReference type="UniPathway" id="UPA00262">
    <property type="reaction ID" value="UER00211"/>
</dbReference>
<dbReference type="UniPathway" id="UPA00262">
    <property type="reaction ID" value="UER00222"/>
</dbReference>
<dbReference type="UniPathway" id="UPA00262">
    <property type="reaction ID" value="UER00376"/>
</dbReference>
<dbReference type="Proteomes" id="UP000006838">
    <property type="component" value="Chromosome"/>
</dbReference>
<dbReference type="GO" id="GO:0051287">
    <property type="term" value="F:NAD binding"/>
    <property type="evidence" value="ECO:0007669"/>
    <property type="project" value="InterPro"/>
</dbReference>
<dbReference type="GO" id="GO:0043115">
    <property type="term" value="F:precorrin-2 dehydrogenase activity"/>
    <property type="evidence" value="ECO:0007669"/>
    <property type="project" value="UniProtKB-UniRule"/>
</dbReference>
<dbReference type="GO" id="GO:0051266">
    <property type="term" value="F:sirohydrochlorin ferrochelatase activity"/>
    <property type="evidence" value="ECO:0007669"/>
    <property type="project" value="UniProtKB-EC"/>
</dbReference>
<dbReference type="GO" id="GO:0004851">
    <property type="term" value="F:uroporphyrin-III C-methyltransferase activity"/>
    <property type="evidence" value="ECO:0007669"/>
    <property type="project" value="UniProtKB-UniRule"/>
</dbReference>
<dbReference type="GO" id="GO:0009236">
    <property type="term" value="P:cobalamin biosynthetic process"/>
    <property type="evidence" value="ECO:0007669"/>
    <property type="project" value="UniProtKB-UniRule"/>
</dbReference>
<dbReference type="GO" id="GO:0032259">
    <property type="term" value="P:methylation"/>
    <property type="evidence" value="ECO:0007669"/>
    <property type="project" value="UniProtKB-KW"/>
</dbReference>
<dbReference type="GO" id="GO:0019354">
    <property type="term" value="P:siroheme biosynthetic process"/>
    <property type="evidence" value="ECO:0007669"/>
    <property type="project" value="UniProtKB-UniRule"/>
</dbReference>
<dbReference type="CDD" id="cd11642">
    <property type="entry name" value="SUMT"/>
    <property type="match status" value="1"/>
</dbReference>
<dbReference type="FunFam" id="3.30.160.110:FF:000001">
    <property type="entry name" value="Siroheme synthase"/>
    <property type="match status" value="1"/>
</dbReference>
<dbReference type="FunFam" id="3.30.950.10:FF:000001">
    <property type="entry name" value="Siroheme synthase"/>
    <property type="match status" value="1"/>
</dbReference>
<dbReference type="FunFam" id="3.40.1010.10:FF:000001">
    <property type="entry name" value="Siroheme synthase"/>
    <property type="match status" value="1"/>
</dbReference>
<dbReference type="Gene3D" id="3.40.1010.10">
    <property type="entry name" value="Cobalt-precorrin-4 Transmethylase, Domain 1"/>
    <property type="match status" value="1"/>
</dbReference>
<dbReference type="Gene3D" id="3.30.950.10">
    <property type="entry name" value="Methyltransferase, Cobalt-precorrin-4 Transmethylase, Domain 2"/>
    <property type="match status" value="1"/>
</dbReference>
<dbReference type="Gene3D" id="3.40.50.720">
    <property type="entry name" value="NAD(P)-binding Rossmann-like Domain"/>
    <property type="match status" value="1"/>
</dbReference>
<dbReference type="Gene3D" id="1.10.8.210">
    <property type="entry name" value="Sirohaem synthase, dimerisation domain"/>
    <property type="match status" value="1"/>
</dbReference>
<dbReference type="Gene3D" id="3.30.160.110">
    <property type="entry name" value="Siroheme synthase, domain 2"/>
    <property type="match status" value="1"/>
</dbReference>
<dbReference type="HAMAP" id="MF_01646">
    <property type="entry name" value="Siroheme_synth"/>
    <property type="match status" value="1"/>
</dbReference>
<dbReference type="InterPro" id="IPR000878">
    <property type="entry name" value="4pyrrol_Mease"/>
</dbReference>
<dbReference type="InterPro" id="IPR035996">
    <property type="entry name" value="4pyrrol_Methylase_sf"/>
</dbReference>
<dbReference type="InterPro" id="IPR014777">
    <property type="entry name" value="4pyrrole_Mease_sub1"/>
</dbReference>
<dbReference type="InterPro" id="IPR014776">
    <property type="entry name" value="4pyrrole_Mease_sub2"/>
</dbReference>
<dbReference type="InterPro" id="IPR006366">
    <property type="entry name" value="CobA/CysG_C"/>
</dbReference>
<dbReference type="InterPro" id="IPR036291">
    <property type="entry name" value="NAD(P)-bd_dom_sf"/>
</dbReference>
<dbReference type="InterPro" id="IPR050161">
    <property type="entry name" value="Siro_Cobalamin_biosynth"/>
</dbReference>
<dbReference type="InterPro" id="IPR037115">
    <property type="entry name" value="Sirohaem_synt_dimer_dom_sf"/>
</dbReference>
<dbReference type="InterPro" id="IPR012409">
    <property type="entry name" value="Sirohaem_synth"/>
</dbReference>
<dbReference type="InterPro" id="IPR028281">
    <property type="entry name" value="Sirohaem_synthase_central"/>
</dbReference>
<dbReference type="InterPro" id="IPR019478">
    <property type="entry name" value="Sirohaem_synthase_dimer_dom"/>
</dbReference>
<dbReference type="InterPro" id="IPR006367">
    <property type="entry name" value="Sirohaem_synthase_N"/>
</dbReference>
<dbReference type="InterPro" id="IPR003043">
    <property type="entry name" value="Uropor_MeTrfase_CS"/>
</dbReference>
<dbReference type="NCBIfam" id="TIGR01469">
    <property type="entry name" value="cobA_cysG_Cterm"/>
    <property type="match status" value="1"/>
</dbReference>
<dbReference type="NCBIfam" id="TIGR01470">
    <property type="entry name" value="cysG_Nterm"/>
    <property type="match status" value="1"/>
</dbReference>
<dbReference type="NCBIfam" id="NF004790">
    <property type="entry name" value="PRK06136.1"/>
    <property type="match status" value="1"/>
</dbReference>
<dbReference type="NCBIfam" id="NF007922">
    <property type="entry name" value="PRK10637.1"/>
    <property type="match status" value="1"/>
</dbReference>
<dbReference type="PANTHER" id="PTHR45790:SF1">
    <property type="entry name" value="SIROHEME SYNTHASE"/>
    <property type="match status" value="1"/>
</dbReference>
<dbReference type="PANTHER" id="PTHR45790">
    <property type="entry name" value="SIROHEME SYNTHASE-RELATED"/>
    <property type="match status" value="1"/>
</dbReference>
<dbReference type="Pfam" id="PF10414">
    <property type="entry name" value="CysG_dimeriser"/>
    <property type="match status" value="1"/>
</dbReference>
<dbReference type="Pfam" id="PF13241">
    <property type="entry name" value="NAD_binding_7"/>
    <property type="match status" value="1"/>
</dbReference>
<dbReference type="Pfam" id="PF14824">
    <property type="entry name" value="Sirohm_synth_M"/>
    <property type="match status" value="1"/>
</dbReference>
<dbReference type="Pfam" id="PF00590">
    <property type="entry name" value="TP_methylase"/>
    <property type="match status" value="1"/>
</dbReference>
<dbReference type="PIRSF" id="PIRSF036426">
    <property type="entry name" value="Sirohaem_synth"/>
    <property type="match status" value="1"/>
</dbReference>
<dbReference type="SUPFAM" id="SSF51735">
    <property type="entry name" value="NAD(P)-binding Rossmann-fold domains"/>
    <property type="match status" value="1"/>
</dbReference>
<dbReference type="SUPFAM" id="SSF75615">
    <property type="entry name" value="Siroheme synthase middle domains-like"/>
    <property type="match status" value="1"/>
</dbReference>
<dbReference type="SUPFAM" id="SSF53790">
    <property type="entry name" value="Tetrapyrrole methylase"/>
    <property type="match status" value="1"/>
</dbReference>
<dbReference type="PROSITE" id="PS00840">
    <property type="entry name" value="SUMT_2"/>
    <property type="match status" value="1"/>
</dbReference>
<accession>Q3JCS0</accession>
<evidence type="ECO:0000255" key="1">
    <source>
        <dbReference type="HAMAP-Rule" id="MF_01646"/>
    </source>
</evidence>
<sequence length="468" mass="51081">MQYLPIFLNIRGQQCLVVGGGTVAVRKVALLRQAGAEVKVIAPKLHEQLQEWADKGKITAQQASFSETEIKSCYLVIAATDDSSLNEQVYHLATAQGVLVNVADCPRFCDFILPSIVDRSPVIVAVSSGGASPVLARLLRARLETLIPQAYGRLGQFAARYRSRIKQRITGIRARRIFWEKVLQGSIAERIFAGQEEEAEGALEAALEGGFVPEQGEVYLVGAGPGDPDLLTFRALRLMQQADVVFHDRLVSPEVLALVRREAERIYVGKKRSWHAVRQEEINMMLVRSAREGKRVLRLKGGDPFIFGRGGEEIATLAAENIPFQVVPGITAASGCASYAGIPLTHRDHAHACIFVTGQLKEGRLSLNWQALVQPQQTIVVYMGLSGLEILCQELIAHGMPAVTPAALVQQGTTSRQRVLTGTLATLPDIVQGEDIHAPTLVIIGGVVALYPQLAWFKVPDREPLDAR</sequence>
<feature type="chain" id="PRO_0000330525" description="Siroheme synthase">
    <location>
        <begin position="1"/>
        <end position="468"/>
    </location>
</feature>
<feature type="region of interest" description="Precorrin-2 dehydrogenase /sirohydrochlorin ferrochelatase" evidence="1">
    <location>
        <begin position="1"/>
        <end position="203"/>
    </location>
</feature>
<feature type="region of interest" description="Uroporphyrinogen-III C-methyltransferase" evidence="1">
    <location>
        <begin position="216"/>
        <end position="468"/>
    </location>
</feature>
<feature type="active site" description="Proton acceptor" evidence="1">
    <location>
        <position position="248"/>
    </location>
</feature>
<feature type="active site" description="Proton donor" evidence="1">
    <location>
        <position position="270"/>
    </location>
</feature>
<feature type="binding site" evidence="1">
    <location>
        <begin position="22"/>
        <end position="23"/>
    </location>
    <ligand>
        <name>NAD(+)</name>
        <dbReference type="ChEBI" id="CHEBI:57540"/>
    </ligand>
</feature>
<feature type="binding site" evidence="1">
    <location>
        <begin position="43"/>
        <end position="44"/>
    </location>
    <ligand>
        <name>NAD(+)</name>
        <dbReference type="ChEBI" id="CHEBI:57540"/>
    </ligand>
</feature>
<feature type="binding site" evidence="1">
    <location>
        <position position="225"/>
    </location>
    <ligand>
        <name>S-adenosyl-L-methionine</name>
        <dbReference type="ChEBI" id="CHEBI:59789"/>
    </ligand>
</feature>
<feature type="binding site" evidence="1">
    <location>
        <begin position="301"/>
        <end position="303"/>
    </location>
    <ligand>
        <name>S-adenosyl-L-methionine</name>
        <dbReference type="ChEBI" id="CHEBI:59789"/>
    </ligand>
</feature>
<feature type="binding site" evidence="1">
    <location>
        <position position="306"/>
    </location>
    <ligand>
        <name>S-adenosyl-L-methionine</name>
        <dbReference type="ChEBI" id="CHEBI:59789"/>
    </ligand>
</feature>
<feature type="binding site" evidence="1">
    <location>
        <begin position="331"/>
        <end position="332"/>
    </location>
    <ligand>
        <name>S-adenosyl-L-methionine</name>
        <dbReference type="ChEBI" id="CHEBI:59789"/>
    </ligand>
</feature>
<feature type="binding site" evidence="1">
    <location>
        <position position="383"/>
    </location>
    <ligand>
        <name>S-adenosyl-L-methionine</name>
        <dbReference type="ChEBI" id="CHEBI:59789"/>
    </ligand>
</feature>
<feature type="binding site" evidence="1">
    <location>
        <position position="412"/>
    </location>
    <ligand>
        <name>S-adenosyl-L-methionine</name>
        <dbReference type="ChEBI" id="CHEBI:59789"/>
    </ligand>
</feature>
<feature type="modified residue" description="Phosphoserine" evidence="1">
    <location>
        <position position="128"/>
    </location>
</feature>
<protein>
    <recommendedName>
        <fullName evidence="1">Siroheme synthase</fullName>
    </recommendedName>
    <domain>
        <recommendedName>
            <fullName evidence="1">Uroporphyrinogen-III C-methyltransferase</fullName>
            <shortName evidence="1">Urogen III methylase</shortName>
            <ecNumber evidence="1">2.1.1.107</ecNumber>
        </recommendedName>
        <alternativeName>
            <fullName evidence="1">SUMT</fullName>
        </alternativeName>
        <alternativeName>
            <fullName evidence="1">Uroporphyrinogen III methylase</fullName>
            <shortName evidence="1">UROM</shortName>
        </alternativeName>
    </domain>
    <domain>
        <recommendedName>
            <fullName evidence="1">Precorrin-2 dehydrogenase</fullName>
            <ecNumber evidence="1">1.3.1.76</ecNumber>
        </recommendedName>
    </domain>
    <domain>
        <recommendedName>
            <fullName evidence="1">Sirohydrochlorin ferrochelatase</fullName>
            <ecNumber evidence="1">4.99.1.4</ecNumber>
        </recommendedName>
    </domain>
</protein>
<proteinExistence type="inferred from homology"/>